<evidence type="ECO:0000255" key="1">
    <source>
        <dbReference type="HAMAP-Rule" id="MF_00080"/>
    </source>
</evidence>
<reference key="1">
    <citation type="journal article" date="1996" name="DNA Res.">
        <title>Sequence analysis of the genome of the unicellular cyanobacterium Synechocystis sp. strain PCC6803. II. Sequence determination of the entire genome and assignment of potential protein-coding regions.</title>
        <authorList>
            <person name="Kaneko T."/>
            <person name="Sato S."/>
            <person name="Kotani H."/>
            <person name="Tanaka A."/>
            <person name="Asamizu E."/>
            <person name="Nakamura Y."/>
            <person name="Miyajima N."/>
            <person name="Hirosawa M."/>
            <person name="Sugiura M."/>
            <person name="Sasamoto S."/>
            <person name="Kimura T."/>
            <person name="Hosouchi T."/>
            <person name="Matsuno A."/>
            <person name="Muraki A."/>
            <person name="Nakazaki N."/>
            <person name="Naruo K."/>
            <person name="Okumura S."/>
            <person name="Shimpo S."/>
            <person name="Takeuchi C."/>
            <person name="Wada T."/>
            <person name="Watanabe A."/>
            <person name="Yamada M."/>
            <person name="Yasuda M."/>
            <person name="Tabata S."/>
        </authorList>
    </citation>
    <scope>NUCLEOTIDE SEQUENCE [LARGE SCALE GENOMIC DNA]</scope>
    <source>
        <strain>ATCC 27184 / PCC 6803 / Kazusa</strain>
    </source>
</reference>
<accession>P72874</accession>
<name>IF3_SYNY3</name>
<keyword id="KW-0963">Cytoplasm</keyword>
<keyword id="KW-0396">Initiation factor</keyword>
<keyword id="KW-0648">Protein biosynthesis</keyword>
<keyword id="KW-1185">Reference proteome</keyword>
<comment type="function">
    <text evidence="1">IF-3 binds to the 30S ribosomal subunit and shifts the equilibrium between 70S ribosomes and their 50S and 30S subunits in favor of the free subunits, thus enhancing the availability of 30S subunits on which protein synthesis initiation begins.</text>
</comment>
<comment type="subunit">
    <text evidence="1">Monomer.</text>
</comment>
<comment type="subcellular location">
    <subcellularLocation>
        <location evidence="1">Cytoplasm</location>
    </subcellularLocation>
</comment>
<comment type="similarity">
    <text evidence="1">Belongs to the IF-3 family.</text>
</comment>
<protein>
    <recommendedName>
        <fullName evidence="1">Translation initiation factor IF-3</fullName>
    </recommendedName>
</protein>
<dbReference type="EMBL" id="BA000022">
    <property type="protein sequence ID" value="BAA16890.1"/>
    <property type="molecule type" value="Genomic_DNA"/>
</dbReference>
<dbReference type="PIR" id="S74739">
    <property type="entry name" value="S74739"/>
</dbReference>
<dbReference type="SMR" id="P72874"/>
<dbReference type="FunCoup" id="P72874">
    <property type="interactions" value="433"/>
</dbReference>
<dbReference type="IntAct" id="P72874">
    <property type="interactions" value="2"/>
</dbReference>
<dbReference type="STRING" id="1148.gene:10497749"/>
<dbReference type="PaxDb" id="1148-1651964"/>
<dbReference type="EnsemblBacteria" id="BAA16890">
    <property type="protein sequence ID" value="BAA16890"/>
    <property type="gene ID" value="BAA16890"/>
</dbReference>
<dbReference type="KEGG" id="syn:slr0974"/>
<dbReference type="eggNOG" id="COG0290">
    <property type="taxonomic scope" value="Bacteria"/>
</dbReference>
<dbReference type="InParanoid" id="P72874"/>
<dbReference type="PhylomeDB" id="P72874"/>
<dbReference type="Proteomes" id="UP000001425">
    <property type="component" value="Chromosome"/>
</dbReference>
<dbReference type="GO" id="GO:0005829">
    <property type="term" value="C:cytosol"/>
    <property type="evidence" value="ECO:0000318"/>
    <property type="project" value="GO_Central"/>
</dbReference>
<dbReference type="GO" id="GO:0043022">
    <property type="term" value="F:ribosome binding"/>
    <property type="evidence" value="ECO:0000318"/>
    <property type="project" value="GO_Central"/>
</dbReference>
<dbReference type="GO" id="GO:0003743">
    <property type="term" value="F:translation initiation factor activity"/>
    <property type="evidence" value="ECO:0000318"/>
    <property type="project" value="GO_Central"/>
</dbReference>
<dbReference type="GO" id="GO:0032790">
    <property type="term" value="P:ribosome disassembly"/>
    <property type="evidence" value="ECO:0000318"/>
    <property type="project" value="GO_Central"/>
</dbReference>
<dbReference type="FunFam" id="3.10.20.80:FF:000001">
    <property type="entry name" value="Translation initiation factor IF-3"/>
    <property type="match status" value="1"/>
</dbReference>
<dbReference type="FunFam" id="3.30.110.10:FF:000001">
    <property type="entry name" value="Translation initiation factor IF-3"/>
    <property type="match status" value="1"/>
</dbReference>
<dbReference type="Gene3D" id="3.30.110.10">
    <property type="entry name" value="Translation initiation factor 3 (IF-3), C-terminal domain"/>
    <property type="match status" value="1"/>
</dbReference>
<dbReference type="Gene3D" id="3.10.20.80">
    <property type="entry name" value="Translation initiation factor 3 (IF-3), N-terminal domain"/>
    <property type="match status" value="1"/>
</dbReference>
<dbReference type="HAMAP" id="MF_00080">
    <property type="entry name" value="IF_3"/>
    <property type="match status" value="1"/>
</dbReference>
<dbReference type="InterPro" id="IPR036788">
    <property type="entry name" value="T_IF-3_C_sf"/>
</dbReference>
<dbReference type="InterPro" id="IPR036787">
    <property type="entry name" value="T_IF-3_N_sf"/>
</dbReference>
<dbReference type="InterPro" id="IPR019813">
    <property type="entry name" value="Translation_initiation_fac3_CS"/>
</dbReference>
<dbReference type="InterPro" id="IPR001288">
    <property type="entry name" value="Translation_initiation_fac_3"/>
</dbReference>
<dbReference type="InterPro" id="IPR019815">
    <property type="entry name" value="Translation_initiation_fac_3_C"/>
</dbReference>
<dbReference type="InterPro" id="IPR019814">
    <property type="entry name" value="Translation_initiation_fac_3_N"/>
</dbReference>
<dbReference type="NCBIfam" id="TIGR00168">
    <property type="entry name" value="infC"/>
    <property type="match status" value="1"/>
</dbReference>
<dbReference type="PANTHER" id="PTHR10938">
    <property type="entry name" value="TRANSLATION INITIATION FACTOR IF-3"/>
    <property type="match status" value="1"/>
</dbReference>
<dbReference type="PANTHER" id="PTHR10938:SF0">
    <property type="entry name" value="TRANSLATION INITIATION FACTOR IF-3, MITOCHONDRIAL"/>
    <property type="match status" value="1"/>
</dbReference>
<dbReference type="Pfam" id="PF00707">
    <property type="entry name" value="IF3_C"/>
    <property type="match status" value="1"/>
</dbReference>
<dbReference type="Pfam" id="PF05198">
    <property type="entry name" value="IF3_N"/>
    <property type="match status" value="1"/>
</dbReference>
<dbReference type="SUPFAM" id="SSF55200">
    <property type="entry name" value="Translation initiation factor IF3, C-terminal domain"/>
    <property type="match status" value="1"/>
</dbReference>
<dbReference type="SUPFAM" id="SSF54364">
    <property type="entry name" value="Translation initiation factor IF3, N-terminal domain"/>
    <property type="match status" value="1"/>
</dbReference>
<dbReference type="PROSITE" id="PS00938">
    <property type="entry name" value="IF3"/>
    <property type="match status" value="1"/>
</dbReference>
<feature type="chain" id="PRO_0000177596" description="Translation initiation factor IF-3">
    <location>
        <begin position="1"/>
        <end position="177"/>
    </location>
</feature>
<sequence length="177" mass="20560">MADKRRPQRDLPQINERIRFPEIRVIDSDGAQLGIITPNEAMEIADERGLDLVLVSETADPPVCRIMDYGKYKFEQEKKAREAKKKQHTADVKEVKMRYKIDEHDYQVRINQAKRFLKAGDKVKATVNFRGREIQHAHLAKELLDRMATDLATEADIQQAPKREGRNMMMFLSPKKV</sequence>
<gene>
    <name evidence="1" type="primary">infC</name>
    <name type="ordered locus">slr0974</name>
</gene>
<organism>
    <name type="scientific">Synechocystis sp. (strain ATCC 27184 / PCC 6803 / Kazusa)</name>
    <dbReference type="NCBI Taxonomy" id="1111708"/>
    <lineage>
        <taxon>Bacteria</taxon>
        <taxon>Bacillati</taxon>
        <taxon>Cyanobacteriota</taxon>
        <taxon>Cyanophyceae</taxon>
        <taxon>Synechococcales</taxon>
        <taxon>Merismopediaceae</taxon>
        <taxon>Synechocystis</taxon>
    </lineage>
</organism>
<proteinExistence type="inferred from homology"/>